<evidence type="ECO:0000255" key="1">
    <source>
        <dbReference type="HAMAP-Rule" id="MF_00300"/>
    </source>
</evidence>
<dbReference type="EC" id="4.2.3.5" evidence="1"/>
<dbReference type="EMBL" id="CP000348">
    <property type="protein sequence ID" value="ABJ80263.1"/>
    <property type="molecule type" value="Genomic_DNA"/>
</dbReference>
<dbReference type="RefSeq" id="WP_011671167.1">
    <property type="nucleotide sequence ID" value="NC_008508.1"/>
</dbReference>
<dbReference type="SMR" id="Q04XD2"/>
<dbReference type="KEGG" id="lbl:LBL_2947"/>
<dbReference type="HOGENOM" id="CLU_034547_0_2_12"/>
<dbReference type="UniPathway" id="UPA00053">
    <property type="reaction ID" value="UER00090"/>
</dbReference>
<dbReference type="GO" id="GO:0005829">
    <property type="term" value="C:cytosol"/>
    <property type="evidence" value="ECO:0007669"/>
    <property type="project" value="TreeGrafter"/>
</dbReference>
<dbReference type="GO" id="GO:0004107">
    <property type="term" value="F:chorismate synthase activity"/>
    <property type="evidence" value="ECO:0007669"/>
    <property type="project" value="UniProtKB-UniRule"/>
</dbReference>
<dbReference type="GO" id="GO:0010181">
    <property type="term" value="F:FMN binding"/>
    <property type="evidence" value="ECO:0007669"/>
    <property type="project" value="TreeGrafter"/>
</dbReference>
<dbReference type="GO" id="GO:0008652">
    <property type="term" value="P:amino acid biosynthetic process"/>
    <property type="evidence" value="ECO:0007669"/>
    <property type="project" value="UniProtKB-KW"/>
</dbReference>
<dbReference type="GO" id="GO:0009073">
    <property type="term" value="P:aromatic amino acid family biosynthetic process"/>
    <property type="evidence" value="ECO:0007669"/>
    <property type="project" value="UniProtKB-KW"/>
</dbReference>
<dbReference type="GO" id="GO:0009423">
    <property type="term" value="P:chorismate biosynthetic process"/>
    <property type="evidence" value="ECO:0007669"/>
    <property type="project" value="UniProtKB-UniRule"/>
</dbReference>
<dbReference type="CDD" id="cd07304">
    <property type="entry name" value="Chorismate_synthase"/>
    <property type="match status" value="1"/>
</dbReference>
<dbReference type="FunFam" id="3.60.150.10:FF:000003">
    <property type="entry name" value="Chorismate synthase"/>
    <property type="match status" value="1"/>
</dbReference>
<dbReference type="Gene3D" id="3.60.150.10">
    <property type="entry name" value="Chorismate synthase AroC"/>
    <property type="match status" value="1"/>
</dbReference>
<dbReference type="HAMAP" id="MF_00300">
    <property type="entry name" value="Chorismate_synth"/>
    <property type="match status" value="1"/>
</dbReference>
<dbReference type="InterPro" id="IPR000453">
    <property type="entry name" value="Chorismate_synth"/>
</dbReference>
<dbReference type="InterPro" id="IPR035904">
    <property type="entry name" value="Chorismate_synth_AroC_sf"/>
</dbReference>
<dbReference type="InterPro" id="IPR020541">
    <property type="entry name" value="Chorismate_synthase_CS"/>
</dbReference>
<dbReference type="NCBIfam" id="TIGR00033">
    <property type="entry name" value="aroC"/>
    <property type="match status" value="1"/>
</dbReference>
<dbReference type="NCBIfam" id="NF003793">
    <property type="entry name" value="PRK05382.1"/>
    <property type="match status" value="1"/>
</dbReference>
<dbReference type="PANTHER" id="PTHR21085">
    <property type="entry name" value="CHORISMATE SYNTHASE"/>
    <property type="match status" value="1"/>
</dbReference>
<dbReference type="PANTHER" id="PTHR21085:SF0">
    <property type="entry name" value="CHORISMATE SYNTHASE"/>
    <property type="match status" value="1"/>
</dbReference>
<dbReference type="Pfam" id="PF01264">
    <property type="entry name" value="Chorismate_synt"/>
    <property type="match status" value="1"/>
</dbReference>
<dbReference type="PIRSF" id="PIRSF001456">
    <property type="entry name" value="Chorismate_synth"/>
    <property type="match status" value="1"/>
</dbReference>
<dbReference type="SUPFAM" id="SSF103263">
    <property type="entry name" value="Chorismate synthase, AroC"/>
    <property type="match status" value="1"/>
</dbReference>
<dbReference type="PROSITE" id="PS00787">
    <property type="entry name" value="CHORISMATE_SYNTHASE_1"/>
    <property type="match status" value="1"/>
</dbReference>
<dbReference type="PROSITE" id="PS00789">
    <property type="entry name" value="CHORISMATE_SYNTHASE_3"/>
    <property type="match status" value="1"/>
</dbReference>
<accession>Q04XD2</accession>
<organism>
    <name type="scientific">Leptospira borgpetersenii serovar Hardjo-bovis (strain L550)</name>
    <dbReference type="NCBI Taxonomy" id="355276"/>
    <lineage>
        <taxon>Bacteria</taxon>
        <taxon>Pseudomonadati</taxon>
        <taxon>Spirochaetota</taxon>
        <taxon>Spirochaetia</taxon>
        <taxon>Leptospirales</taxon>
        <taxon>Leptospiraceae</taxon>
        <taxon>Leptospira</taxon>
    </lineage>
</organism>
<proteinExistence type="inferred from homology"/>
<protein>
    <recommendedName>
        <fullName evidence="1">Chorismate synthase</fullName>
        <shortName evidence="1">CS</shortName>
        <ecNumber evidence="1">4.2.3.5</ecNumber>
    </recommendedName>
    <alternativeName>
        <fullName evidence="1">5-enolpyruvylshikimate-3-phosphate phospholyase</fullName>
    </alternativeName>
</protein>
<reference key="1">
    <citation type="journal article" date="2006" name="Proc. Natl. Acad. Sci. U.S.A.">
        <title>Genome reduction in Leptospira borgpetersenii reflects limited transmission potential.</title>
        <authorList>
            <person name="Bulach D.M."/>
            <person name="Zuerner R.L."/>
            <person name="Wilson P."/>
            <person name="Seemann T."/>
            <person name="McGrath A."/>
            <person name="Cullen P.A."/>
            <person name="Davis J."/>
            <person name="Johnson M."/>
            <person name="Kuczek E."/>
            <person name="Alt D.P."/>
            <person name="Peterson-Burch B."/>
            <person name="Coppel R.L."/>
            <person name="Rood J.I."/>
            <person name="Davies J.K."/>
            <person name="Adler B."/>
        </authorList>
    </citation>
    <scope>NUCLEOTIDE SEQUENCE [LARGE SCALE GENOMIC DNA]</scope>
    <source>
        <strain>L550</strain>
    </source>
</reference>
<feature type="chain" id="PRO_1000022507" description="Chorismate synthase">
    <location>
        <begin position="1"/>
        <end position="380"/>
    </location>
</feature>
<feature type="binding site" evidence="1">
    <location>
        <position position="47"/>
    </location>
    <ligand>
        <name>NADP(+)</name>
        <dbReference type="ChEBI" id="CHEBI:58349"/>
    </ligand>
</feature>
<feature type="binding site" evidence="1">
    <location>
        <begin position="124"/>
        <end position="126"/>
    </location>
    <ligand>
        <name>FMN</name>
        <dbReference type="ChEBI" id="CHEBI:58210"/>
    </ligand>
</feature>
<feature type="binding site" evidence="1">
    <location>
        <position position="288"/>
    </location>
    <ligand>
        <name>FMN</name>
        <dbReference type="ChEBI" id="CHEBI:58210"/>
    </ligand>
</feature>
<feature type="binding site" evidence="1">
    <location>
        <begin position="303"/>
        <end position="307"/>
    </location>
    <ligand>
        <name>FMN</name>
        <dbReference type="ChEBI" id="CHEBI:58210"/>
    </ligand>
</feature>
<feature type="binding site" evidence="1">
    <location>
        <position position="329"/>
    </location>
    <ligand>
        <name>FMN</name>
        <dbReference type="ChEBI" id="CHEBI:58210"/>
    </ligand>
</feature>
<gene>
    <name evidence="1" type="primary">aroC</name>
    <name type="ordered locus">LBL_2947</name>
</gene>
<comment type="function">
    <text evidence="1">Catalyzes the anti-1,4-elimination of the C-3 phosphate and the C-6 proR hydrogen from 5-enolpyruvylshikimate-3-phosphate (EPSP) to yield chorismate, which is the branch point compound that serves as the starting substrate for the three terminal pathways of aromatic amino acid biosynthesis. This reaction introduces a second double bond into the aromatic ring system.</text>
</comment>
<comment type="catalytic activity">
    <reaction evidence="1">
        <text>5-O-(1-carboxyvinyl)-3-phosphoshikimate = chorismate + phosphate</text>
        <dbReference type="Rhea" id="RHEA:21020"/>
        <dbReference type="ChEBI" id="CHEBI:29748"/>
        <dbReference type="ChEBI" id="CHEBI:43474"/>
        <dbReference type="ChEBI" id="CHEBI:57701"/>
        <dbReference type="EC" id="4.2.3.5"/>
    </reaction>
</comment>
<comment type="cofactor">
    <cofactor evidence="1">
        <name>FMNH2</name>
        <dbReference type="ChEBI" id="CHEBI:57618"/>
    </cofactor>
    <text evidence="1">Reduced FMN (FMNH(2)).</text>
</comment>
<comment type="pathway">
    <text evidence="1">Metabolic intermediate biosynthesis; chorismate biosynthesis; chorismate from D-erythrose 4-phosphate and phosphoenolpyruvate: step 7/7.</text>
</comment>
<comment type="subunit">
    <text evidence="1">Homotetramer.</text>
</comment>
<comment type="similarity">
    <text evidence="1">Belongs to the chorismate synthase family.</text>
</comment>
<keyword id="KW-0028">Amino-acid biosynthesis</keyword>
<keyword id="KW-0057">Aromatic amino acid biosynthesis</keyword>
<keyword id="KW-0274">FAD</keyword>
<keyword id="KW-0285">Flavoprotein</keyword>
<keyword id="KW-0288">FMN</keyword>
<keyword id="KW-0456">Lyase</keyword>
<keyword id="KW-0521">NADP</keyword>
<sequence>MPSSWGKIFKVGTFGESHGKSVGVIVEGVPAGIPIRLEEIQKDLDRRRPGQSNLTTPRDENDTVRVVSGVFEGKTIGSPIALVVENQNTNSKDYENLRTTYRPSHADYTYQMKYGFRAHVGGGRSSVRETIGRVAAAAIARMILKDDLGIETVAWVDSIGTIQSTIGEKYPKSREEVDQNEVRCPDAVSADQMRSLILKMKEAGDSVGGTIKCVSYNLPPGLGDPVYDKLDGDLAKAILSIPACKGFEVGSGFSGTLLTGSSHNDEFYVEGGTGKVRTKTNNSGGLQGGISNGEELVIRAAFKPTSTIFKKQNTINLKGEETTLEAKGRHDPCVLPRAVPIIEAVVNLVLVDAYLYQRAINPQWFQKWARIPDYYKDLEL</sequence>
<name>AROC_LEPBL</name>